<keyword id="KW-0007">Acetylation</keyword>
<keyword id="KW-0067">ATP-binding</keyword>
<keyword id="KW-0436">Ligase</keyword>
<keyword id="KW-0460">Magnesium</keyword>
<keyword id="KW-0479">Metal-binding</keyword>
<keyword id="KW-0547">Nucleotide-binding</keyword>
<keyword id="KW-1185">Reference proteome</keyword>
<dbReference type="EC" id="6.2.1.1" evidence="1"/>
<dbReference type="EMBL" id="BX571658">
    <property type="protein sequence ID" value="CAE09727.1"/>
    <property type="molecule type" value="Genomic_DNA"/>
</dbReference>
<dbReference type="RefSeq" id="WP_011138527.1">
    <property type="nucleotide sequence ID" value="NC_005090.1"/>
</dbReference>
<dbReference type="SMR" id="Q7M9Y2"/>
<dbReference type="STRING" id="273121.WS0595"/>
<dbReference type="KEGG" id="wsu:WS0595"/>
<dbReference type="eggNOG" id="COG0365">
    <property type="taxonomic scope" value="Bacteria"/>
</dbReference>
<dbReference type="HOGENOM" id="CLU_000022_3_6_7"/>
<dbReference type="Proteomes" id="UP000000422">
    <property type="component" value="Chromosome"/>
</dbReference>
<dbReference type="GO" id="GO:0005829">
    <property type="term" value="C:cytosol"/>
    <property type="evidence" value="ECO:0007669"/>
    <property type="project" value="TreeGrafter"/>
</dbReference>
<dbReference type="GO" id="GO:0003987">
    <property type="term" value="F:acetate-CoA ligase activity"/>
    <property type="evidence" value="ECO:0007669"/>
    <property type="project" value="UniProtKB-UniRule"/>
</dbReference>
<dbReference type="GO" id="GO:0016208">
    <property type="term" value="F:AMP binding"/>
    <property type="evidence" value="ECO:0007669"/>
    <property type="project" value="InterPro"/>
</dbReference>
<dbReference type="GO" id="GO:0005524">
    <property type="term" value="F:ATP binding"/>
    <property type="evidence" value="ECO:0007669"/>
    <property type="project" value="UniProtKB-KW"/>
</dbReference>
<dbReference type="GO" id="GO:0046872">
    <property type="term" value="F:metal ion binding"/>
    <property type="evidence" value="ECO:0007669"/>
    <property type="project" value="UniProtKB-KW"/>
</dbReference>
<dbReference type="GO" id="GO:0019427">
    <property type="term" value="P:acetyl-CoA biosynthetic process from acetate"/>
    <property type="evidence" value="ECO:0007669"/>
    <property type="project" value="InterPro"/>
</dbReference>
<dbReference type="CDD" id="cd05966">
    <property type="entry name" value="ACS"/>
    <property type="match status" value="1"/>
</dbReference>
<dbReference type="FunFam" id="3.40.50.12780:FF:000001">
    <property type="entry name" value="Acetyl-coenzyme A synthetase"/>
    <property type="match status" value="1"/>
</dbReference>
<dbReference type="Gene3D" id="3.30.300.30">
    <property type="match status" value="1"/>
</dbReference>
<dbReference type="Gene3D" id="3.40.50.12780">
    <property type="entry name" value="N-terminal domain of ligase-like"/>
    <property type="match status" value="1"/>
</dbReference>
<dbReference type="HAMAP" id="MF_01123">
    <property type="entry name" value="Ac_CoA_synth"/>
    <property type="match status" value="1"/>
</dbReference>
<dbReference type="InterPro" id="IPR011904">
    <property type="entry name" value="Ac_CoA_lig"/>
</dbReference>
<dbReference type="InterPro" id="IPR032387">
    <property type="entry name" value="ACAS_N"/>
</dbReference>
<dbReference type="InterPro" id="IPR025110">
    <property type="entry name" value="AMP-bd_C"/>
</dbReference>
<dbReference type="InterPro" id="IPR045851">
    <property type="entry name" value="AMP-bd_C_sf"/>
</dbReference>
<dbReference type="InterPro" id="IPR020845">
    <property type="entry name" value="AMP-binding_CS"/>
</dbReference>
<dbReference type="InterPro" id="IPR000873">
    <property type="entry name" value="AMP-dep_synth/lig_dom"/>
</dbReference>
<dbReference type="InterPro" id="IPR042099">
    <property type="entry name" value="ANL_N_sf"/>
</dbReference>
<dbReference type="NCBIfam" id="TIGR02188">
    <property type="entry name" value="Ac_CoA_lig_AcsA"/>
    <property type="match status" value="1"/>
</dbReference>
<dbReference type="NCBIfam" id="NF001208">
    <property type="entry name" value="PRK00174.1"/>
    <property type="match status" value="1"/>
</dbReference>
<dbReference type="PANTHER" id="PTHR24095">
    <property type="entry name" value="ACETYL-COENZYME A SYNTHETASE"/>
    <property type="match status" value="1"/>
</dbReference>
<dbReference type="PANTHER" id="PTHR24095:SF14">
    <property type="entry name" value="ACETYL-COENZYME A SYNTHETASE 1"/>
    <property type="match status" value="1"/>
</dbReference>
<dbReference type="Pfam" id="PF16177">
    <property type="entry name" value="ACAS_N"/>
    <property type="match status" value="1"/>
</dbReference>
<dbReference type="Pfam" id="PF00501">
    <property type="entry name" value="AMP-binding"/>
    <property type="match status" value="1"/>
</dbReference>
<dbReference type="Pfam" id="PF13193">
    <property type="entry name" value="AMP-binding_C"/>
    <property type="match status" value="1"/>
</dbReference>
<dbReference type="SUPFAM" id="SSF56801">
    <property type="entry name" value="Acetyl-CoA synthetase-like"/>
    <property type="match status" value="1"/>
</dbReference>
<dbReference type="PROSITE" id="PS00455">
    <property type="entry name" value="AMP_BINDING"/>
    <property type="match status" value="1"/>
</dbReference>
<protein>
    <recommendedName>
        <fullName evidence="1">Acetyl-coenzyme A synthetase</fullName>
        <shortName evidence="1">AcCoA synthetase</shortName>
        <shortName evidence="1">Acs</shortName>
        <ecNumber evidence="1">6.2.1.1</ecNumber>
    </recommendedName>
    <alternativeName>
        <fullName evidence="1">Acetate--CoA ligase</fullName>
    </alternativeName>
    <alternativeName>
        <fullName evidence="1">Acyl-activating enzyme</fullName>
    </alternativeName>
</protein>
<evidence type="ECO:0000255" key="1">
    <source>
        <dbReference type="HAMAP-Rule" id="MF_01123"/>
    </source>
</evidence>
<accession>Q7M9Y2</accession>
<reference key="1">
    <citation type="journal article" date="2003" name="Proc. Natl. Acad. Sci. U.S.A.">
        <title>Complete genome sequence and analysis of Wolinella succinogenes.</title>
        <authorList>
            <person name="Baar C."/>
            <person name="Eppinger M."/>
            <person name="Raddatz G."/>
            <person name="Simon J."/>
            <person name="Lanz C."/>
            <person name="Klimmek O."/>
            <person name="Nandakumar R."/>
            <person name="Gross R."/>
            <person name="Rosinus A."/>
            <person name="Keller H."/>
            <person name="Jagtap P."/>
            <person name="Linke B."/>
            <person name="Meyer F."/>
            <person name="Lederer H."/>
            <person name="Schuster S.C."/>
        </authorList>
    </citation>
    <scope>NUCLEOTIDE SEQUENCE [LARGE SCALE GENOMIC DNA]</scope>
    <source>
        <strain>ATCC 29543 / DSM 1740 / CCUG 13145 / JCM 31913 / LMG 7466 / NCTC 11488 / FDC 602W</strain>
    </source>
</reference>
<comment type="function">
    <text evidence="1">Catalyzes the conversion of acetate into acetyl-CoA (AcCoA), an essential intermediate at the junction of anabolic and catabolic pathways. AcsA undergoes a two-step reaction. In the first half reaction, AcsA combines acetate with ATP to form acetyl-adenylate (AcAMP) intermediate. In the second half reaction, it can then transfer the acetyl group from AcAMP to the sulfhydryl group of CoA, forming the product AcCoA.</text>
</comment>
<comment type="catalytic activity">
    <reaction evidence="1">
        <text>acetate + ATP + CoA = acetyl-CoA + AMP + diphosphate</text>
        <dbReference type="Rhea" id="RHEA:23176"/>
        <dbReference type="ChEBI" id="CHEBI:30089"/>
        <dbReference type="ChEBI" id="CHEBI:30616"/>
        <dbReference type="ChEBI" id="CHEBI:33019"/>
        <dbReference type="ChEBI" id="CHEBI:57287"/>
        <dbReference type="ChEBI" id="CHEBI:57288"/>
        <dbReference type="ChEBI" id="CHEBI:456215"/>
        <dbReference type="EC" id="6.2.1.1"/>
    </reaction>
</comment>
<comment type="cofactor">
    <cofactor evidence="1">
        <name>Mg(2+)</name>
        <dbReference type="ChEBI" id="CHEBI:18420"/>
    </cofactor>
</comment>
<comment type="PTM">
    <text evidence="1">Acetylated. Deacetylation by the SIR2-homolog deacetylase activates the enzyme.</text>
</comment>
<comment type="similarity">
    <text evidence="1">Belongs to the ATP-dependent AMP-binding enzyme family.</text>
</comment>
<proteinExistence type="inferred from homology"/>
<name>ACSA_WOLSU</name>
<gene>
    <name evidence="1" type="primary">acsA</name>
    <name type="ordered locus">WS0595</name>
</gene>
<organism>
    <name type="scientific">Wolinella succinogenes (strain ATCC 29543 / DSM 1740 / CCUG 13145 / JCM 31913 / LMG 7466 / NCTC 11488 / FDC 602W)</name>
    <name type="common">Vibrio succinogenes</name>
    <dbReference type="NCBI Taxonomy" id="273121"/>
    <lineage>
        <taxon>Bacteria</taxon>
        <taxon>Pseudomonadati</taxon>
        <taxon>Campylobacterota</taxon>
        <taxon>Epsilonproteobacteria</taxon>
        <taxon>Campylobacterales</taxon>
        <taxon>Helicobacteraceae</taxon>
        <taxon>Wolinella</taxon>
    </lineage>
</organism>
<sequence>MTQTHSTELFKPNRAFAKTARIKNLCEYEDLRLDAEEDFEGFWGKLAKEKIDWMEPFSKVLDESEAPFYKWFVGGKLNVCAQCLDRHLDTRKNKAAIIFEGELGDSRIITYRELFYEVKRTANLLKNKFNVKKGDRVVIYMPMIPEAAFMMLACARIGAIHSVVFGGFSAEALRDRIIDAEAKLVITADGAYRRGKPYMLKPVVDDALAEGACPSIEKVLIVIRNKEEINYVPGRDYIYNEMIGLESAHCPPEPMDAEDPLFLLYTSGSTGKPKGVQHNQAGYILWAQTTMEWVFDVKENDTYWCTADVGWITGHTYIVYGPLAMGATTVMYEGVPIYPDTGRWWKMIEHYRVNQFYTAPTAIRLLHKEGKEEPKKYNLSNLKVLGTVGEPINPDAWNWYYNEIGGGQCPIVDTWWQTETGGHMISPLPGATPIKPGCATLPLPGIFAEVIDEEGNPKPAGEQGYLCITKPWPSMIRNIWGDPKRYESSYFSTCKKNGKPVYFAGDGAIRDERGYITITGRMDDVINVSGHRLGTAEIESAIAKHPGVAETAVVSRLDEIKGESVYAFIVLKPGYEDNVAEELQLLKEINAVITREIGPLAKADTMLFVPGLPKTRSGKIMRRILRSIARGEEITQDTSTLEDPAIVQKIQQLA</sequence>
<feature type="chain" id="PRO_1000065331" description="Acetyl-coenzyme A synthetase">
    <location>
        <begin position="1"/>
        <end position="654"/>
    </location>
</feature>
<feature type="binding site" evidence="1">
    <location>
        <begin position="193"/>
        <end position="196"/>
    </location>
    <ligand>
        <name>CoA</name>
        <dbReference type="ChEBI" id="CHEBI:57287"/>
    </ligand>
</feature>
<feature type="binding site" evidence="1">
    <location>
        <position position="313"/>
    </location>
    <ligand>
        <name>CoA</name>
        <dbReference type="ChEBI" id="CHEBI:57287"/>
    </ligand>
</feature>
<feature type="binding site" evidence="1">
    <location>
        <begin position="389"/>
        <end position="391"/>
    </location>
    <ligand>
        <name>ATP</name>
        <dbReference type="ChEBI" id="CHEBI:30616"/>
    </ligand>
</feature>
<feature type="binding site" evidence="1">
    <location>
        <begin position="413"/>
        <end position="418"/>
    </location>
    <ligand>
        <name>ATP</name>
        <dbReference type="ChEBI" id="CHEBI:30616"/>
    </ligand>
</feature>
<feature type="binding site" evidence="1">
    <location>
        <position position="506"/>
    </location>
    <ligand>
        <name>ATP</name>
        <dbReference type="ChEBI" id="CHEBI:30616"/>
    </ligand>
</feature>
<feature type="binding site" evidence="1">
    <location>
        <position position="521"/>
    </location>
    <ligand>
        <name>ATP</name>
        <dbReference type="ChEBI" id="CHEBI:30616"/>
    </ligand>
</feature>
<feature type="binding site" evidence="1">
    <location>
        <position position="529"/>
    </location>
    <ligand>
        <name>CoA</name>
        <dbReference type="ChEBI" id="CHEBI:57287"/>
    </ligand>
</feature>
<feature type="binding site" evidence="1">
    <location>
        <position position="532"/>
    </location>
    <ligand>
        <name>ATP</name>
        <dbReference type="ChEBI" id="CHEBI:30616"/>
    </ligand>
</feature>
<feature type="binding site" evidence="1">
    <location>
        <position position="545"/>
    </location>
    <ligand>
        <name>Mg(2+)</name>
        <dbReference type="ChEBI" id="CHEBI:18420"/>
    </ligand>
</feature>
<feature type="binding site" evidence="1">
    <location>
        <position position="548"/>
    </location>
    <ligand>
        <name>Mg(2+)</name>
        <dbReference type="ChEBI" id="CHEBI:18420"/>
    </ligand>
</feature>
<feature type="modified residue" description="N6-acetyllysine" evidence="1">
    <location>
        <position position="619"/>
    </location>
</feature>